<protein>
    <recommendedName>
        <fullName evidence="3">Small ribosomal subunit protein uS11</fullName>
    </recommendedName>
    <alternativeName>
        <fullName>40S ribosomal protein S14</fullName>
    </alternativeName>
    <alternativeName>
        <fullName>CRP2</fullName>
    </alternativeName>
</protein>
<name>RS14_NEUCR</name>
<proteinExistence type="inferred from homology"/>
<comment type="function">
    <text evidence="1">Component of the ribosome, a large ribonucleoprotein complex responsible for the synthesis of proteins in the cell. The small ribosomal subunit (SSU) binds messenger RNAs (mRNAs) and translates the encoded message by selecting cognate aminoacyl-transfer RNA (tRNA) molecules. The large subunit (LSU) contains the ribosomal catalytic site termed the peptidyl transferase center (PTC), which catalyzes the formation of peptide bonds, thereby polymerizing the amino acids delivered by tRNAs into a polypeptide chain. The nascent polypeptides leave the ribosome through a tunnel in the LSU and interact with protein factors that function in enzymatic processing, targeting, and the membrane insertion of nascent chains at the exit of the ribosomal tunnel. uS11 is involved in nucleolar processing of pre-18S ribosomal RNA and ribosome assembly.</text>
</comment>
<comment type="subunit">
    <text evidence="3">Component of the small ribosomal subunit (SSU). Mature N.crassa ribosomes consist of a small (40S) and a large (60S) subunit. The 40S small subunit contains 1 molecule of ribosomal RNA (18S rRNA) and at least 32 different proteins. The large 60S subunit contains 3 rRNA molecules (26S, 5.8S and 5S rRNA) and at least 42 different proteins.</text>
</comment>
<comment type="subcellular location">
    <subcellularLocation>
        <location evidence="1">Cytoplasm</location>
    </subcellularLocation>
</comment>
<comment type="similarity">
    <text evidence="3">Belongs to the universal ribosomal protein uS11 family.</text>
</comment>
<reference key="1">
    <citation type="journal article" date="1990" name="Nucleic Acids Res.">
        <title>A Neurospora crassa ribosomal protein gene, homologous to yeast CRY1, contains sequences potentially coordinating its transcription with rRNA genes.</title>
        <authorList>
            <person name="Tyler B.M."/>
            <person name="Harrison K."/>
        </authorList>
    </citation>
    <scope>NUCLEOTIDE SEQUENCE [GENOMIC DNA]</scope>
    <source>
        <strain>ATCC 24698 / 74-OR23-1A / CBS 708.71 / DSM 1257 / FGSC 987</strain>
    </source>
</reference>
<reference key="2">
    <citation type="submission" date="2001-05" db="EMBL/GenBank/DDBJ databases">
        <authorList>
            <person name="Tyler B.M."/>
        </authorList>
    </citation>
    <scope>SEQUENCE REVISION</scope>
</reference>
<reference key="3">
    <citation type="journal article" date="2003" name="Nature">
        <title>The genome sequence of the filamentous fungus Neurospora crassa.</title>
        <authorList>
            <person name="Galagan J.E."/>
            <person name="Calvo S.E."/>
            <person name="Borkovich K.A."/>
            <person name="Selker E.U."/>
            <person name="Read N.D."/>
            <person name="Jaffe D.B."/>
            <person name="FitzHugh W."/>
            <person name="Ma L.-J."/>
            <person name="Smirnov S."/>
            <person name="Purcell S."/>
            <person name="Rehman B."/>
            <person name="Elkins T."/>
            <person name="Engels R."/>
            <person name="Wang S."/>
            <person name="Nielsen C.B."/>
            <person name="Butler J."/>
            <person name="Endrizzi M."/>
            <person name="Qui D."/>
            <person name="Ianakiev P."/>
            <person name="Bell-Pedersen D."/>
            <person name="Nelson M.A."/>
            <person name="Werner-Washburne M."/>
            <person name="Selitrennikoff C.P."/>
            <person name="Kinsey J.A."/>
            <person name="Braun E.L."/>
            <person name="Zelter A."/>
            <person name="Schulte U."/>
            <person name="Kothe G.O."/>
            <person name="Jedd G."/>
            <person name="Mewes H.-W."/>
            <person name="Staben C."/>
            <person name="Marcotte E."/>
            <person name="Greenberg D."/>
            <person name="Roy A."/>
            <person name="Foley K."/>
            <person name="Naylor J."/>
            <person name="Stange-Thomann N."/>
            <person name="Barrett R."/>
            <person name="Gnerre S."/>
            <person name="Kamal M."/>
            <person name="Kamvysselis M."/>
            <person name="Mauceli E.W."/>
            <person name="Bielke C."/>
            <person name="Rudd S."/>
            <person name="Frishman D."/>
            <person name="Krystofova S."/>
            <person name="Rasmussen C."/>
            <person name="Metzenberg R.L."/>
            <person name="Perkins D.D."/>
            <person name="Kroken S."/>
            <person name="Cogoni C."/>
            <person name="Macino G."/>
            <person name="Catcheside D.E.A."/>
            <person name="Li W."/>
            <person name="Pratt R.J."/>
            <person name="Osmani S.A."/>
            <person name="DeSouza C.P.C."/>
            <person name="Glass N.L."/>
            <person name="Orbach M.J."/>
            <person name="Berglund J.A."/>
            <person name="Voelker R."/>
            <person name="Yarden O."/>
            <person name="Plamann M."/>
            <person name="Seiler S."/>
            <person name="Dunlap J.C."/>
            <person name="Radford A."/>
            <person name="Aramayo R."/>
            <person name="Natvig D.O."/>
            <person name="Alex L.A."/>
            <person name="Mannhaupt G."/>
            <person name="Ebbole D.J."/>
            <person name="Freitag M."/>
            <person name="Paulsen I."/>
            <person name="Sachs M.S."/>
            <person name="Lander E.S."/>
            <person name="Nusbaum C."/>
            <person name="Birren B.W."/>
        </authorList>
    </citation>
    <scope>NUCLEOTIDE SEQUENCE [LARGE SCALE GENOMIC DNA]</scope>
    <source>
        <strain>ATCC 24698 / 74-OR23-1A / CBS 708.71 / DSM 1257 / FGSC 987</strain>
    </source>
</reference>
<organism>
    <name type="scientific">Neurospora crassa (strain ATCC 24698 / 74-OR23-1A / CBS 708.71 / DSM 1257 / FGSC 987)</name>
    <dbReference type="NCBI Taxonomy" id="367110"/>
    <lineage>
        <taxon>Eukaryota</taxon>
        <taxon>Fungi</taxon>
        <taxon>Dikarya</taxon>
        <taxon>Ascomycota</taxon>
        <taxon>Pezizomycotina</taxon>
        <taxon>Sordariomycetes</taxon>
        <taxon>Sordariomycetidae</taxon>
        <taxon>Sordariales</taxon>
        <taxon>Sordariaceae</taxon>
        <taxon>Neurospora</taxon>
    </lineage>
</organism>
<accession>P19115</accession>
<accession>Q7RVH6</accession>
<gene>
    <name type="primary">rps-14</name>
    <name type="synonym">crp-2</name>
    <name type="ORF">NCU07830</name>
</gene>
<feature type="chain" id="PRO_0000123357" description="Small ribosomal subunit protein uS11">
    <location>
        <begin position="1"/>
        <end position="150"/>
    </location>
</feature>
<feature type="region of interest" description="Disordered" evidence="2">
    <location>
        <begin position="126"/>
        <end position="150"/>
    </location>
</feature>
<feature type="compositionally biased region" description="Basic residues" evidence="2">
    <location>
        <begin position="141"/>
        <end position="150"/>
    </location>
</feature>
<feature type="sequence conflict" description="In Ref. 3; EAA33715." evidence="3" ref="3">
    <original>TD</original>
    <variation>IC</variation>
    <location>
        <begin position="52"/>
        <end position="53"/>
    </location>
</feature>
<feature type="sequence conflict" description="In Ref. 3; EAA33715." evidence="3" ref="3">
    <original>I</original>
    <variation>T</variation>
    <location>
        <position position="56"/>
    </location>
</feature>
<feature type="sequence conflict" description="In Ref. 3; EAA33715." evidence="3" ref="3">
    <original>I</original>
    <variation>M</variation>
    <location>
        <position position="59"/>
    </location>
</feature>
<feature type="sequence conflict" description="In Ref. 3; EAA33715." evidence="3" ref="3">
    <original>R</original>
    <variation>K</variation>
    <location>
        <position position="105"/>
    </location>
</feature>
<evidence type="ECO:0000250" key="1">
    <source>
        <dbReference type="UniProtKB" id="P06367"/>
    </source>
</evidence>
<evidence type="ECO:0000256" key="2">
    <source>
        <dbReference type="SAM" id="MobiDB-lite"/>
    </source>
</evidence>
<evidence type="ECO:0000305" key="3"/>
<sequence>MPPKKAARPAQENISLGPQIREGELVFGVARIFASFNDTFVHVTDLSGRETTDRVIGGIKVKADRDESSPYAAMLAAQDVAARCKELGITALHIKIRATGGNGTRTPGPGAQSALRALARSGMKIGRIEDVTPTPSDSTRRKGGRRGRRL</sequence>
<dbReference type="EMBL" id="X53734">
    <property type="protein sequence ID" value="CAA37766.2"/>
    <property type="molecule type" value="Genomic_DNA"/>
</dbReference>
<dbReference type="EMBL" id="CM002238">
    <property type="protein sequence ID" value="EAA33715.1"/>
    <property type="molecule type" value="Genomic_DNA"/>
</dbReference>
<dbReference type="PIR" id="S11667">
    <property type="entry name" value="S11667"/>
</dbReference>
<dbReference type="RefSeq" id="XP_962951.1">
    <property type="nucleotide sequence ID" value="XM_957858.3"/>
</dbReference>
<dbReference type="SMR" id="P19115"/>
<dbReference type="FunCoup" id="P19115">
    <property type="interactions" value="996"/>
</dbReference>
<dbReference type="STRING" id="367110.P19115"/>
<dbReference type="PaxDb" id="5141-EFNCRP00000007514"/>
<dbReference type="EnsemblFungi" id="EAA33715">
    <property type="protein sequence ID" value="EAA33715"/>
    <property type="gene ID" value="NCU07830"/>
</dbReference>
<dbReference type="GeneID" id="3879099"/>
<dbReference type="KEGG" id="ncr:NCU07830"/>
<dbReference type="HOGENOM" id="CLU_072439_6_0_1"/>
<dbReference type="InParanoid" id="P19115"/>
<dbReference type="OrthoDB" id="1677536at2759"/>
<dbReference type="Proteomes" id="UP000001805">
    <property type="component" value="Chromosome 3, Linkage Group III"/>
</dbReference>
<dbReference type="GO" id="GO:0022627">
    <property type="term" value="C:cytosolic small ribosomal subunit"/>
    <property type="evidence" value="ECO:0000318"/>
    <property type="project" value="GO_Central"/>
</dbReference>
<dbReference type="GO" id="GO:0003735">
    <property type="term" value="F:structural constituent of ribosome"/>
    <property type="evidence" value="ECO:0000318"/>
    <property type="project" value="GO_Central"/>
</dbReference>
<dbReference type="GO" id="GO:0000028">
    <property type="term" value="P:ribosomal small subunit assembly"/>
    <property type="evidence" value="ECO:0000318"/>
    <property type="project" value="GO_Central"/>
</dbReference>
<dbReference type="GO" id="GO:0006412">
    <property type="term" value="P:translation"/>
    <property type="evidence" value="ECO:0000318"/>
    <property type="project" value="GO_Central"/>
</dbReference>
<dbReference type="FunFam" id="3.30.420.80:FF:000002">
    <property type="entry name" value="40S ribosomal protein S14"/>
    <property type="match status" value="1"/>
</dbReference>
<dbReference type="Gene3D" id="3.30.420.80">
    <property type="entry name" value="Ribosomal protein S11"/>
    <property type="match status" value="1"/>
</dbReference>
<dbReference type="HAMAP" id="MF_01310">
    <property type="entry name" value="Ribosomal_uS11"/>
    <property type="match status" value="1"/>
</dbReference>
<dbReference type="InterPro" id="IPR001971">
    <property type="entry name" value="Ribosomal_uS11"/>
</dbReference>
<dbReference type="InterPro" id="IPR018102">
    <property type="entry name" value="Ribosomal_uS11_CS"/>
</dbReference>
<dbReference type="InterPro" id="IPR036967">
    <property type="entry name" value="Ribosomal_uS11_sf"/>
</dbReference>
<dbReference type="NCBIfam" id="NF007176">
    <property type="entry name" value="PRK09607.1"/>
    <property type="match status" value="1"/>
</dbReference>
<dbReference type="PANTHER" id="PTHR11759">
    <property type="entry name" value="40S RIBOSOMAL PROTEIN S14/30S RIBOSOMAL PROTEIN S11"/>
    <property type="match status" value="1"/>
</dbReference>
<dbReference type="Pfam" id="PF00411">
    <property type="entry name" value="Ribosomal_S11"/>
    <property type="match status" value="1"/>
</dbReference>
<dbReference type="PIRSF" id="PIRSF002131">
    <property type="entry name" value="Ribosomal_S11"/>
    <property type="match status" value="1"/>
</dbReference>
<dbReference type="SUPFAM" id="SSF53137">
    <property type="entry name" value="Translational machinery components"/>
    <property type="match status" value="1"/>
</dbReference>
<dbReference type="PROSITE" id="PS00054">
    <property type="entry name" value="RIBOSOMAL_S11"/>
    <property type="match status" value="1"/>
</dbReference>
<keyword id="KW-0963">Cytoplasm</keyword>
<keyword id="KW-1185">Reference proteome</keyword>
<keyword id="KW-0687">Ribonucleoprotein</keyword>
<keyword id="KW-0689">Ribosomal protein</keyword>